<proteinExistence type="inferred from homology"/>
<gene>
    <name evidence="1" type="primary">UTR4</name>
    <name type="ORF">SCRG_04432</name>
</gene>
<keyword id="KW-0028">Amino-acid biosynthesis</keyword>
<keyword id="KW-0963">Cytoplasm</keyword>
<keyword id="KW-0378">Hydrolase</keyword>
<keyword id="KW-0460">Magnesium</keyword>
<keyword id="KW-0479">Metal-binding</keyword>
<keyword id="KW-0486">Methionine biosynthesis</keyword>
<keyword id="KW-0539">Nucleus</keyword>
<reference key="1">
    <citation type="submission" date="2005-03" db="EMBL/GenBank/DDBJ databases">
        <title>Annotation of the Saccharomyces cerevisiae RM11-1a genome.</title>
        <authorList>
            <consortium name="The Broad Institute Genome Sequencing Platform"/>
            <person name="Birren B.W."/>
            <person name="Lander E.S."/>
            <person name="Galagan J.E."/>
            <person name="Nusbaum C."/>
            <person name="Devon K."/>
            <person name="Cuomo C."/>
            <person name="Jaffe D.B."/>
            <person name="Butler J."/>
            <person name="Alvarez P."/>
            <person name="Gnerre S."/>
            <person name="Grabherr M."/>
            <person name="Kleber M."/>
            <person name="Mauceli E.W."/>
            <person name="Brockman W."/>
            <person name="MacCallum I.A."/>
            <person name="Rounsley S."/>
            <person name="Young S.K."/>
            <person name="LaButti K."/>
            <person name="Pushparaj V."/>
            <person name="DeCaprio D."/>
            <person name="Crawford M."/>
            <person name="Koehrsen M."/>
            <person name="Engels R."/>
            <person name="Montgomery P."/>
            <person name="Pearson M."/>
            <person name="Howarth C."/>
            <person name="Larson L."/>
            <person name="Luoma S."/>
            <person name="White J."/>
            <person name="O'Leary S."/>
            <person name="Kodira C.D."/>
            <person name="Zeng Q."/>
            <person name="Yandava C."/>
            <person name="Alvarado L."/>
            <person name="Pratt S."/>
            <person name="Kruglyak L."/>
        </authorList>
    </citation>
    <scope>NUCLEOTIDE SEQUENCE [LARGE SCALE GENOMIC DNA]</scope>
    <source>
        <strain>RM11-1a</strain>
    </source>
</reference>
<protein>
    <recommendedName>
        <fullName evidence="1">Enolase-phosphatase E1</fullName>
        <ecNumber evidence="1">3.1.3.77</ecNumber>
    </recommendedName>
    <alternativeName>
        <fullName evidence="1">2,3-diketo-5-methylthio-1-phosphopentane phosphatase</fullName>
    </alternativeName>
    <alternativeName>
        <fullName evidence="1">Unknown transcript 4 protein</fullName>
    </alternativeName>
</protein>
<name>ENOPH_YEAS1</name>
<feature type="chain" id="PRO_0000377656" description="Enolase-phosphatase E1">
    <location>
        <begin position="1"/>
        <end position="227"/>
    </location>
</feature>
<feature type="binding site" evidence="1">
    <location>
        <position position="11"/>
    </location>
    <ligand>
        <name>Mg(2+)</name>
        <dbReference type="ChEBI" id="CHEBI:18420"/>
    </ligand>
</feature>
<feature type="binding site" evidence="1">
    <location>
        <position position="13"/>
    </location>
    <ligand>
        <name>Mg(2+)</name>
        <dbReference type="ChEBI" id="CHEBI:18420"/>
    </ligand>
</feature>
<feature type="binding site" evidence="1">
    <location>
        <begin position="118"/>
        <end position="119"/>
    </location>
    <ligand>
        <name>substrate</name>
    </ligand>
</feature>
<feature type="binding site" evidence="1">
    <location>
        <position position="161"/>
    </location>
    <ligand>
        <name>substrate</name>
    </ligand>
</feature>
<feature type="binding site" evidence="1">
    <location>
        <position position="186"/>
    </location>
    <ligand>
        <name>Mg(2+)</name>
        <dbReference type="ChEBI" id="CHEBI:18420"/>
    </ligand>
</feature>
<accession>B3LRX9</accession>
<dbReference type="EC" id="3.1.3.77" evidence="1"/>
<dbReference type="EMBL" id="CH408052">
    <property type="protein sequence ID" value="EDV08795.1"/>
    <property type="status" value="ALT_INIT"/>
    <property type="molecule type" value="Genomic_DNA"/>
</dbReference>
<dbReference type="SMR" id="B3LRX9"/>
<dbReference type="HOGENOM" id="CLU_023273_1_1_1"/>
<dbReference type="OrthoDB" id="27667at4893"/>
<dbReference type="UniPathway" id="UPA00904">
    <property type="reaction ID" value="UER00876"/>
</dbReference>
<dbReference type="UniPathway" id="UPA00904">
    <property type="reaction ID" value="UER00877"/>
</dbReference>
<dbReference type="Proteomes" id="UP000008335">
    <property type="component" value="Unassembled WGS sequence"/>
</dbReference>
<dbReference type="GO" id="GO:0005737">
    <property type="term" value="C:cytoplasm"/>
    <property type="evidence" value="ECO:0007669"/>
    <property type="project" value="UniProtKB-SubCell"/>
</dbReference>
<dbReference type="GO" id="GO:0005634">
    <property type="term" value="C:nucleus"/>
    <property type="evidence" value="ECO:0007669"/>
    <property type="project" value="UniProtKB-SubCell"/>
</dbReference>
<dbReference type="GO" id="GO:0043874">
    <property type="term" value="F:acireductone synthase activity"/>
    <property type="evidence" value="ECO:0007669"/>
    <property type="project" value="UniProtKB-EC"/>
</dbReference>
<dbReference type="GO" id="GO:0000287">
    <property type="term" value="F:magnesium ion binding"/>
    <property type="evidence" value="ECO:0007669"/>
    <property type="project" value="UniProtKB-UniRule"/>
</dbReference>
<dbReference type="GO" id="GO:0019509">
    <property type="term" value="P:L-methionine salvage from methylthioadenosine"/>
    <property type="evidence" value="ECO:0007669"/>
    <property type="project" value="UniProtKB-UniRule"/>
</dbReference>
<dbReference type="CDD" id="cd01629">
    <property type="entry name" value="HAD_EP"/>
    <property type="match status" value="1"/>
</dbReference>
<dbReference type="FunFam" id="3.40.50.1000:FF:000079">
    <property type="entry name" value="Enolase-phosphatase E1"/>
    <property type="match status" value="1"/>
</dbReference>
<dbReference type="Gene3D" id="1.10.720.60">
    <property type="match status" value="1"/>
</dbReference>
<dbReference type="Gene3D" id="3.40.50.1000">
    <property type="entry name" value="HAD superfamily/HAD-like"/>
    <property type="match status" value="1"/>
</dbReference>
<dbReference type="HAMAP" id="MF_03117">
    <property type="entry name" value="Salvage_MtnC_euk"/>
    <property type="match status" value="1"/>
</dbReference>
<dbReference type="InterPro" id="IPR023943">
    <property type="entry name" value="Enolase-ppase_E1"/>
</dbReference>
<dbReference type="InterPro" id="IPR027511">
    <property type="entry name" value="ENOPH1_eukaryotes"/>
</dbReference>
<dbReference type="InterPro" id="IPR036412">
    <property type="entry name" value="HAD-like_sf"/>
</dbReference>
<dbReference type="InterPro" id="IPR023214">
    <property type="entry name" value="HAD_sf"/>
</dbReference>
<dbReference type="NCBIfam" id="TIGR01691">
    <property type="entry name" value="enolase-ppase"/>
    <property type="match status" value="1"/>
</dbReference>
<dbReference type="PANTHER" id="PTHR20371">
    <property type="entry name" value="ENOLASE-PHOSPHATASE E1"/>
    <property type="match status" value="1"/>
</dbReference>
<dbReference type="PANTHER" id="PTHR20371:SF1">
    <property type="entry name" value="ENOLASE-PHOSPHATASE E1"/>
    <property type="match status" value="1"/>
</dbReference>
<dbReference type="Pfam" id="PF00702">
    <property type="entry name" value="Hydrolase"/>
    <property type="match status" value="1"/>
</dbReference>
<dbReference type="SFLD" id="SFLDG01133">
    <property type="entry name" value="C1.5.4:_Enolase-phosphatase_Li"/>
    <property type="match status" value="1"/>
</dbReference>
<dbReference type="SFLD" id="SFLDF00044">
    <property type="entry name" value="enolase-phosphatase"/>
    <property type="match status" value="1"/>
</dbReference>
<dbReference type="SUPFAM" id="SSF56784">
    <property type="entry name" value="HAD-like"/>
    <property type="match status" value="1"/>
</dbReference>
<evidence type="ECO:0000255" key="1">
    <source>
        <dbReference type="HAMAP-Rule" id="MF_03117"/>
    </source>
</evidence>
<evidence type="ECO:0000305" key="2"/>
<organism>
    <name type="scientific">Saccharomyces cerevisiae (strain RM11-1a)</name>
    <name type="common">Baker's yeast</name>
    <dbReference type="NCBI Taxonomy" id="285006"/>
    <lineage>
        <taxon>Eukaryota</taxon>
        <taxon>Fungi</taxon>
        <taxon>Dikarya</taxon>
        <taxon>Ascomycota</taxon>
        <taxon>Saccharomycotina</taxon>
        <taxon>Saccharomycetes</taxon>
        <taxon>Saccharomycetales</taxon>
        <taxon>Saccharomycetaceae</taxon>
        <taxon>Saccharomyces</taxon>
    </lineage>
</organism>
<sequence length="227" mass="25208">MGDNYSTYLLDIEGTVCPISFVKETLFPYFTKKVPQLVQQDTRDSPVSNILSQFHIDDKEQLQAHILELVAKDVKDPILKQLQGYIWAQGYESGQIKAPVYADAIDFIKRKKRVFIYSSGSVKAQKLLFGYVQDPNAPAHDSLDLNSYIDGYFDINTSGKKTETQSYANILRDIGAKASEVLFLSDNPLELDAAAGVGIATGLASRPGNAPVPDGQKYQVYKDFETL</sequence>
<comment type="function">
    <text evidence="1">Bifunctional enzyme that catalyzes the enolization of 2,3-diketo-5-methylthiopentyl-1-phosphate (DK-MTP-1-P) into the intermediate 2-hydroxy-3-keto-5-methylthiopentenyl-1-phosphate (HK-MTPenyl-1-P), which is then dephosphorylated to form the acireductone 1,2-dihydroxy-3-keto-5-methylthiopentene (DHK-MTPene).</text>
</comment>
<comment type="catalytic activity">
    <reaction evidence="1">
        <text>5-methylsulfanyl-2,3-dioxopentyl phosphate + H2O = 1,2-dihydroxy-5-(methylsulfanyl)pent-1-en-3-one + phosphate</text>
        <dbReference type="Rhea" id="RHEA:21700"/>
        <dbReference type="ChEBI" id="CHEBI:15377"/>
        <dbReference type="ChEBI" id="CHEBI:43474"/>
        <dbReference type="ChEBI" id="CHEBI:49252"/>
        <dbReference type="ChEBI" id="CHEBI:58828"/>
        <dbReference type="EC" id="3.1.3.77"/>
    </reaction>
</comment>
<comment type="cofactor">
    <cofactor evidence="1">
        <name>Mg(2+)</name>
        <dbReference type="ChEBI" id="CHEBI:18420"/>
    </cofactor>
    <text evidence="1">Binds 1 Mg(2+) ion per subunit.</text>
</comment>
<comment type="pathway">
    <text evidence="1">Amino-acid biosynthesis; L-methionine biosynthesis via salvage pathway; L-methionine from S-methyl-5-thio-alpha-D-ribose 1-phosphate: step 3/6.</text>
</comment>
<comment type="pathway">
    <text evidence="1">Amino-acid biosynthesis; L-methionine biosynthesis via salvage pathway; L-methionine from S-methyl-5-thio-alpha-D-ribose 1-phosphate: step 4/6.</text>
</comment>
<comment type="subunit">
    <text evidence="1">Monomer.</text>
</comment>
<comment type="subcellular location">
    <subcellularLocation>
        <location evidence="1">Cytoplasm</location>
    </subcellularLocation>
    <subcellularLocation>
        <location evidence="1">Nucleus</location>
    </subcellularLocation>
</comment>
<comment type="similarity">
    <text evidence="1">Belongs to the HAD-like hydrolase superfamily. MasA/MtnC family.</text>
</comment>
<comment type="sequence caution" evidence="2">
    <conflict type="erroneous initiation">
        <sequence resource="EMBL-CDS" id="EDV08795"/>
    </conflict>
    <text>Extended N-terminus.</text>
</comment>